<reference key="1">
    <citation type="journal article" date="2004" name="Proc. Natl. Acad. Sci. U.S.A.">
        <title>Genome sequence of the enterobacterial phytopathogen Erwinia carotovora subsp. atroseptica and characterization of virulence factors.</title>
        <authorList>
            <person name="Bell K.S."/>
            <person name="Sebaihia M."/>
            <person name="Pritchard L."/>
            <person name="Holden M.T.G."/>
            <person name="Hyman L.J."/>
            <person name="Holeva M.C."/>
            <person name="Thomson N.R."/>
            <person name="Bentley S.D."/>
            <person name="Churcher L.J.C."/>
            <person name="Mungall K."/>
            <person name="Atkin R."/>
            <person name="Bason N."/>
            <person name="Brooks K."/>
            <person name="Chillingworth T."/>
            <person name="Clark K."/>
            <person name="Doggett J."/>
            <person name="Fraser A."/>
            <person name="Hance Z."/>
            <person name="Hauser H."/>
            <person name="Jagels K."/>
            <person name="Moule S."/>
            <person name="Norbertczak H."/>
            <person name="Ormond D."/>
            <person name="Price C."/>
            <person name="Quail M.A."/>
            <person name="Sanders M."/>
            <person name="Walker D."/>
            <person name="Whitehead S."/>
            <person name="Salmond G.P.C."/>
            <person name="Birch P.R.J."/>
            <person name="Parkhill J."/>
            <person name="Toth I.K."/>
        </authorList>
    </citation>
    <scope>NUCLEOTIDE SEQUENCE [LARGE SCALE GENOMIC DNA]</scope>
    <source>
        <strain>SCRI 1043 / ATCC BAA-672</strain>
    </source>
</reference>
<dbReference type="EMBL" id="BX950851">
    <property type="protein sequence ID" value="CAG75292.1"/>
    <property type="molecule type" value="Genomic_DNA"/>
</dbReference>
<dbReference type="RefSeq" id="WP_011093945.1">
    <property type="nucleotide sequence ID" value="NC_004547.2"/>
</dbReference>
<dbReference type="KEGG" id="eca:ECA2389"/>
<dbReference type="PATRIC" id="fig|218491.5.peg.2417"/>
<dbReference type="eggNOG" id="COG1971">
    <property type="taxonomic scope" value="Bacteria"/>
</dbReference>
<dbReference type="HOGENOM" id="CLU_096410_0_0_6"/>
<dbReference type="OrthoDB" id="9811590at2"/>
<dbReference type="Proteomes" id="UP000007966">
    <property type="component" value="Chromosome"/>
</dbReference>
<dbReference type="GO" id="GO:0005886">
    <property type="term" value="C:plasma membrane"/>
    <property type="evidence" value="ECO:0007669"/>
    <property type="project" value="UniProtKB-SubCell"/>
</dbReference>
<dbReference type="GO" id="GO:0005384">
    <property type="term" value="F:manganese ion transmembrane transporter activity"/>
    <property type="evidence" value="ECO:0007669"/>
    <property type="project" value="UniProtKB-UniRule"/>
</dbReference>
<dbReference type="HAMAP" id="MF_01521">
    <property type="entry name" value="MntP_pump"/>
    <property type="match status" value="1"/>
</dbReference>
<dbReference type="InterPro" id="IPR003810">
    <property type="entry name" value="Mntp/YtaF"/>
</dbReference>
<dbReference type="InterPro" id="IPR022929">
    <property type="entry name" value="Put_MntP"/>
</dbReference>
<dbReference type="NCBIfam" id="NF008546">
    <property type="entry name" value="PRK11469.1"/>
    <property type="match status" value="1"/>
</dbReference>
<dbReference type="PANTHER" id="PTHR35529">
    <property type="entry name" value="MANGANESE EFFLUX PUMP MNTP-RELATED"/>
    <property type="match status" value="1"/>
</dbReference>
<dbReference type="PANTHER" id="PTHR35529:SF1">
    <property type="entry name" value="MANGANESE EFFLUX PUMP MNTP-RELATED"/>
    <property type="match status" value="1"/>
</dbReference>
<dbReference type="Pfam" id="PF02659">
    <property type="entry name" value="Mntp"/>
    <property type="match status" value="1"/>
</dbReference>
<gene>
    <name evidence="1" type="primary">mntP</name>
    <name type="ordered locus">ECA2389</name>
</gene>
<evidence type="ECO:0000255" key="1">
    <source>
        <dbReference type="HAMAP-Rule" id="MF_01521"/>
    </source>
</evidence>
<comment type="function">
    <text evidence="1">Probably functions as a manganese efflux pump.</text>
</comment>
<comment type="subcellular location">
    <subcellularLocation>
        <location evidence="1">Cell inner membrane</location>
        <topology evidence="1">Multi-pass membrane protein</topology>
    </subcellularLocation>
</comment>
<comment type="similarity">
    <text evidence="1">Belongs to the MntP (TC 9.B.29) family.</text>
</comment>
<sequence>MNMSATLILAFAMSMDAFAASIGKGAVLHNPRFRDAIRTGLIFGVIEAITPLIGWALGFFASQYILEWDHWVAFTLLLILGGRMVVEGFKDSPDCRCEKVKNHSLALLVCTAIATSLDAMAIGVGLAFLQVNIFHTAMVIGCATMIMVTLGMMIGRYIGPILGKKAEIIGGLVLIGIGCNILYEHLG</sequence>
<protein>
    <recommendedName>
        <fullName evidence="1">Putative manganese efflux pump MntP</fullName>
    </recommendedName>
</protein>
<organism>
    <name type="scientific">Pectobacterium atrosepticum (strain SCRI 1043 / ATCC BAA-672)</name>
    <name type="common">Erwinia carotovora subsp. atroseptica</name>
    <dbReference type="NCBI Taxonomy" id="218491"/>
    <lineage>
        <taxon>Bacteria</taxon>
        <taxon>Pseudomonadati</taxon>
        <taxon>Pseudomonadota</taxon>
        <taxon>Gammaproteobacteria</taxon>
        <taxon>Enterobacterales</taxon>
        <taxon>Pectobacteriaceae</taxon>
        <taxon>Pectobacterium</taxon>
    </lineage>
</organism>
<name>MNTP_PECAS</name>
<accession>Q6D4K1</accession>
<proteinExistence type="inferred from homology"/>
<feature type="chain" id="PRO_0000155652" description="Putative manganese efflux pump MntP">
    <location>
        <begin position="1"/>
        <end position="187"/>
    </location>
</feature>
<feature type="transmembrane region" description="Helical" evidence="1">
    <location>
        <begin position="3"/>
        <end position="23"/>
    </location>
</feature>
<feature type="transmembrane region" description="Helical" evidence="1">
    <location>
        <begin position="41"/>
        <end position="61"/>
    </location>
</feature>
<feature type="transmembrane region" description="Helical" evidence="1">
    <location>
        <begin position="62"/>
        <end position="82"/>
    </location>
</feature>
<feature type="transmembrane region" description="Helical" evidence="1">
    <location>
        <begin position="107"/>
        <end position="129"/>
    </location>
</feature>
<feature type="transmembrane region" description="Helical" evidence="1">
    <location>
        <begin position="143"/>
        <end position="163"/>
    </location>
</feature>
<feature type="transmembrane region" description="Helical" evidence="1">
    <location>
        <begin position="166"/>
        <end position="186"/>
    </location>
</feature>
<keyword id="KW-0997">Cell inner membrane</keyword>
<keyword id="KW-1003">Cell membrane</keyword>
<keyword id="KW-0406">Ion transport</keyword>
<keyword id="KW-0464">Manganese</keyword>
<keyword id="KW-0472">Membrane</keyword>
<keyword id="KW-1185">Reference proteome</keyword>
<keyword id="KW-0812">Transmembrane</keyword>
<keyword id="KW-1133">Transmembrane helix</keyword>
<keyword id="KW-0813">Transport</keyword>